<comment type="function">
    <text evidence="1">This is one of the proteins that bind and probably mediate the attachment of the 5S RNA into the large ribosomal subunit, where it forms part of the central protuberance.</text>
</comment>
<comment type="subunit">
    <text evidence="1">Part of the 50S ribosomal subunit; part of the 5S rRNA/L5/L18/L25 subcomplex. Contacts the 5S and 23S rRNAs.</text>
</comment>
<comment type="similarity">
    <text evidence="1">Belongs to the universal ribosomal protein uL18 family.</text>
</comment>
<name>RL18_SHESM</name>
<protein>
    <recommendedName>
        <fullName evidence="1">Large ribosomal subunit protein uL18</fullName>
    </recommendedName>
    <alternativeName>
        <fullName evidence="2">50S ribosomal protein L18</fullName>
    </alternativeName>
</protein>
<dbReference type="EMBL" id="CP000446">
    <property type="protein sequence ID" value="ABI37296.1"/>
    <property type="molecule type" value="Genomic_DNA"/>
</dbReference>
<dbReference type="RefSeq" id="WP_007644436.1">
    <property type="nucleotide sequence ID" value="NC_008321.1"/>
</dbReference>
<dbReference type="SMR" id="Q0HNS1"/>
<dbReference type="GeneID" id="67441776"/>
<dbReference type="KEGG" id="she:Shewmr4_0215"/>
<dbReference type="HOGENOM" id="CLU_098841_0_1_6"/>
<dbReference type="GO" id="GO:0022625">
    <property type="term" value="C:cytosolic large ribosomal subunit"/>
    <property type="evidence" value="ECO:0007669"/>
    <property type="project" value="TreeGrafter"/>
</dbReference>
<dbReference type="GO" id="GO:0008097">
    <property type="term" value="F:5S rRNA binding"/>
    <property type="evidence" value="ECO:0007669"/>
    <property type="project" value="TreeGrafter"/>
</dbReference>
<dbReference type="GO" id="GO:0003735">
    <property type="term" value="F:structural constituent of ribosome"/>
    <property type="evidence" value="ECO:0007669"/>
    <property type="project" value="InterPro"/>
</dbReference>
<dbReference type="GO" id="GO:0006412">
    <property type="term" value="P:translation"/>
    <property type="evidence" value="ECO:0007669"/>
    <property type="project" value="UniProtKB-UniRule"/>
</dbReference>
<dbReference type="CDD" id="cd00432">
    <property type="entry name" value="Ribosomal_L18_L5e"/>
    <property type="match status" value="1"/>
</dbReference>
<dbReference type="FunFam" id="3.30.420.100:FF:000001">
    <property type="entry name" value="50S ribosomal protein L18"/>
    <property type="match status" value="1"/>
</dbReference>
<dbReference type="Gene3D" id="3.30.420.100">
    <property type="match status" value="1"/>
</dbReference>
<dbReference type="HAMAP" id="MF_01337_B">
    <property type="entry name" value="Ribosomal_uL18_B"/>
    <property type="match status" value="1"/>
</dbReference>
<dbReference type="InterPro" id="IPR004389">
    <property type="entry name" value="Ribosomal_uL18_bac-type"/>
</dbReference>
<dbReference type="InterPro" id="IPR005484">
    <property type="entry name" value="Ribosomal_uL18_bac/euk"/>
</dbReference>
<dbReference type="NCBIfam" id="TIGR00060">
    <property type="entry name" value="L18_bact"/>
    <property type="match status" value="1"/>
</dbReference>
<dbReference type="PANTHER" id="PTHR12899">
    <property type="entry name" value="39S RIBOSOMAL PROTEIN L18, MITOCHONDRIAL"/>
    <property type="match status" value="1"/>
</dbReference>
<dbReference type="PANTHER" id="PTHR12899:SF3">
    <property type="entry name" value="LARGE RIBOSOMAL SUBUNIT PROTEIN UL18M"/>
    <property type="match status" value="1"/>
</dbReference>
<dbReference type="Pfam" id="PF00861">
    <property type="entry name" value="Ribosomal_L18p"/>
    <property type="match status" value="1"/>
</dbReference>
<dbReference type="SUPFAM" id="SSF53137">
    <property type="entry name" value="Translational machinery components"/>
    <property type="match status" value="1"/>
</dbReference>
<feature type="chain" id="PRO_1000053111" description="Large ribosomal subunit protein uL18">
    <location>
        <begin position="1"/>
        <end position="116"/>
    </location>
</feature>
<reference key="1">
    <citation type="submission" date="2006-08" db="EMBL/GenBank/DDBJ databases">
        <title>Complete sequence of Shewanella sp. MR-4.</title>
        <authorList>
            <consortium name="US DOE Joint Genome Institute"/>
            <person name="Copeland A."/>
            <person name="Lucas S."/>
            <person name="Lapidus A."/>
            <person name="Barry K."/>
            <person name="Detter J.C."/>
            <person name="Glavina del Rio T."/>
            <person name="Hammon N."/>
            <person name="Israni S."/>
            <person name="Dalin E."/>
            <person name="Tice H."/>
            <person name="Pitluck S."/>
            <person name="Kiss H."/>
            <person name="Brettin T."/>
            <person name="Bruce D."/>
            <person name="Han C."/>
            <person name="Tapia R."/>
            <person name="Gilna P."/>
            <person name="Schmutz J."/>
            <person name="Larimer F."/>
            <person name="Land M."/>
            <person name="Hauser L."/>
            <person name="Kyrpides N."/>
            <person name="Mikhailova N."/>
            <person name="Nealson K."/>
            <person name="Konstantinidis K."/>
            <person name="Klappenbach J."/>
            <person name="Tiedje J."/>
            <person name="Richardson P."/>
        </authorList>
    </citation>
    <scope>NUCLEOTIDE SEQUENCE [LARGE SCALE GENOMIC DNA]</scope>
    <source>
        <strain>MR-4</strain>
    </source>
</reference>
<gene>
    <name evidence="1" type="primary">rplR</name>
    <name type="ordered locus">Shewmr4_0215</name>
</gene>
<organism>
    <name type="scientific">Shewanella sp. (strain MR-4)</name>
    <dbReference type="NCBI Taxonomy" id="60480"/>
    <lineage>
        <taxon>Bacteria</taxon>
        <taxon>Pseudomonadati</taxon>
        <taxon>Pseudomonadota</taxon>
        <taxon>Gammaproteobacteria</taxon>
        <taxon>Alteromonadales</taxon>
        <taxon>Shewanellaceae</taxon>
        <taxon>Shewanella</taxon>
    </lineage>
</organism>
<sequence>MDKKTSRLRRAIRARKKIQELGVNRLVVHRTPRHIYAQVINPEAQVVAAASTVEKAVKEQLKSTGNVDAAKAVGKFVAERAIEKGVTSVAFDRSGFKYHGRVAALADAAREAGLQF</sequence>
<keyword id="KW-0687">Ribonucleoprotein</keyword>
<keyword id="KW-0689">Ribosomal protein</keyword>
<keyword id="KW-0694">RNA-binding</keyword>
<keyword id="KW-0699">rRNA-binding</keyword>
<evidence type="ECO:0000255" key="1">
    <source>
        <dbReference type="HAMAP-Rule" id="MF_01337"/>
    </source>
</evidence>
<evidence type="ECO:0000305" key="2"/>
<proteinExistence type="inferred from homology"/>
<accession>Q0HNS1</accession>